<protein>
    <recommendedName>
        <fullName evidence="1">Isoleucine--tRNA ligase</fullName>
        <ecNumber evidence="1">6.1.1.5</ecNumber>
    </recommendedName>
    <alternativeName>
        <fullName evidence="1">Isoleucyl-tRNA synthetase</fullName>
        <shortName evidence="1">IleRS</shortName>
    </alternativeName>
</protein>
<feature type="chain" id="PRO_1000022072" description="Isoleucine--tRNA ligase">
    <location>
        <begin position="1"/>
        <end position="941"/>
    </location>
</feature>
<feature type="short sequence motif" description="'HIGH' region">
    <location>
        <begin position="59"/>
        <end position="69"/>
    </location>
</feature>
<feature type="short sequence motif" description="'KMSKS' region">
    <location>
        <begin position="603"/>
        <end position="607"/>
    </location>
</feature>
<feature type="binding site" evidence="1">
    <location>
        <position position="562"/>
    </location>
    <ligand>
        <name>L-isoleucyl-5'-AMP</name>
        <dbReference type="ChEBI" id="CHEBI:178002"/>
    </ligand>
</feature>
<feature type="binding site" evidence="1">
    <location>
        <position position="606"/>
    </location>
    <ligand>
        <name>ATP</name>
        <dbReference type="ChEBI" id="CHEBI:30616"/>
    </ligand>
</feature>
<feature type="binding site" evidence="1">
    <location>
        <position position="904"/>
    </location>
    <ligand>
        <name>Zn(2+)</name>
        <dbReference type="ChEBI" id="CHEBI:29105"/>
    </ligand>
</feature>
<feature type="binding site" evidence="1">
    <location>
        <position position="907"/>
    </location>
    <ligand>
        <name>Zn(2+)</name>
        <dbReference type="ChEBI" id="CHEBI:29105"/>
    </ligand>
</feature>
<feature type="binding site" evidence="1">
    <location>
        <position position="924"/>
    </location>
    <ligand>
        <name>Zn(2+)</name>
        <dbReference type="ChEBI" id="CHEBI:29105"/>
    </ligand>
</feature>
<feature type="binding site" evidence="1">
    <location>
        <position position="927"/>
    </location>
    <ligand>
        <name>Zn(2+)</name>
        <dbReference type="ChEBI" id="CHEBI:29105"/>
    </ligand>
</feature>
<sequence length="941" mass="106676">MTVDYKNTLNLPETSFPMRGDLAKREPDMLKNWYEKNLYQKIRKASKGKKSFILHDGPPYANGNIHIGHAVNKILKDIIIKSKTALGFDSPYIPGWDCHGLPIELKVEGLVGKPNEKISAAEFRQKCREYASEQVEGQKKDFIRLGVLGDWDNPYLTMNFDTEANIIRTLGKVIENGHLYKGSKPVHWCLDCGSSLAEAEVEYEDKVSPSIYVRFPVESADEIEAKFSAQGRGQGKLSAIIWTTTPWTMPSNRAIAVNADLEYNLVQLGDERVILAAELVESVAKAVGVEQVKILGSVKGADLELSRFHHPFYDFTVPVILGDHVTTDGGTGLVHTAPDHGLDDFIVGKQYDLPMAGLVSNDGKFISMTEFFAGKGVFEANPLVIEKLQEVGNLLKVEKIKHSYPHCWRHKTPIIFRATPQWFIGMETQGLRQQALGEIKQVRWIPDWGQARIEKMVENRPDWCISRQRTWGVPMTLFVHKETEELHPRTLDLLEEVAKRVERAGIQAWWDLDEKELLGADAETYRKVPDTLDVWFDSGSTYSSVVANRLEFNGQNIDMYLEGSDQHRGWFMSSLMLSTATDSKAPYKQVLTHGFTVDGQGRKMSKSIGNIVTPQEVMDKFGGDILRLWVASTDYTGEMTVSDEILKRAADSYRRIRNTARFLLANLNGFDPKRDLVKPEEMISLDRWAVACALDAQHEIKDAYDNYQFHTVVQRLMRFCSVEMGSFYLDIIKDRQYTTKASSLARRSCQTALWHIAEALVRWMAPILSFTADEIWQHLPQTESARAEFVFTEEFYQGLFGLGENEKLDDAYWQQLIKVRSEVNRVLEISRNNKEIGGGLEAEVTLYANDEYRALLEQLGNELRFVLITSKVDVKSLSEKPADLADSELEGITVSVTRSNAEKCPRCWHYSDKIGVNPEHPMLCPRCVENVVGNGEVRHFA</sequence>
<keyword id="KW-0030">Aminoacyl-tRNA synthetase</keyword>
<keyword id="KW-0067">ATP-binding</keyword>
<keyword id="KW-0963">Cytoplasm</keyword>
<keyword id="KW-0436">Ligase</keyword>
<keyword id="KW-0479">Metal-binding</keyword>
<keyword id="KW-0547">Nucleotide-binding</keyword>
<keyword id="KW-0648">Protein biosynthesis</keyword>
<keyword id="KW-0862">Zinc</keyword>
<name>SYI_HAEIE</name>
<proteinExistence type="inferred from homology"/>
<evidence type="ECO:0000255" key="1">
    <source>
        <dbReference type="HAMAP-Rule" id="MF_02002"/>
    </source>
</evidence>
<organism>
    <name type="scientific">Haemophilus influenzae (strain PittEE)</name>
    <dbReference type="NCBI Taxonomy" id="374930"/>
    <lineage>
        <taxon>Bacteria</taxon>
        <taxon>Pseudomonadati</taxon>
        <taxon>Pseudomonadota</taxon>
        <taxon>Gammaproteobacteria</taxon>
        <taxon>Pasteurellales</taxon>
        <taxon>Pasteurellaceae</taxon>
        <taxon>Haemophilus</taxon>
    </lineage>
</organism>
<dbReference type="EC" id="6.1.1.5" evidence="1"/>
<dbReference type="EMBL" id="CP000671">
    <property type="protein sequence ID" value="ABQ98757.1"/>
    <property type="molecule type" value="Genomic_DNA"/>
</dbReference>
<dbReference type="SMR" id="A5UDA6"/>
<dbReference type="KEGG" id="hip:CGSHiEE_07150"/>
<dbReference type="HOGENOM" id="CLU_001493_7_0_6"/>
<dbReference type="GO" id="GO:0005829">
    <property type="term" value="C:cytosol"/>
    <property type="evidence" value="ECO:0007669"/>
    <property type="project" value="TreeGrafter"/>
</dbReference>
<dbReference type="GO" id="GO:0002161">
    <property type="term" value="F:aminoacyl-tRNA deacylase activity"/>
    <property type="evidence" value="ECO:0007669"/>
    <property type="project" value="InterPro"/>
</dbReference>
<dbReference type="GO" id="GO:0005524">
    <property type="term" value="F:ATP binding"/>
    <property type="evidence" value="ECO:0007669"/>
    <property type="project" value="UniProtKB-UniRule"/>
</dbReference>
<dbReference type="GO" id="GO:0004822">
    <property type="term" value="F:isoleucine-tRNA ligase activity"/>
    <property type="evidence" value="ECO:0007669"/>
    <property type="project" value="UniProtKB-UniRule"/>
</dbReference>
<dbReference type="GO" id="GO:0000049">
    <property type="term" value="F:tRNA binding"/>
    <property type="evidence" value="ECO:0007669"/>
    <property type="project" value="InterPro"/>
</dbReference>
<dbReference type="GO" id="GO:0008270">
    <property type="term" value="F:zinc ion binding"/>
    <property type="evidence" value="ECO:0007669"/>
    <property type="project" value="UniProtKB-UniRule"/>
</dbReference>
<dbReference type="GO" id="GO:0006428">
    <property type="term" value="P:isoleucyl-tRNA aminoacylation"/>
    <property type="evidence" value="ECO:0007669"/>
    <property type="project" value="UniProtKB-UniRule"/>
</dbReference>
<dbReference type="CDD" id="cd07960">
    <property type="entry name" value="Anticodon_Ia_Ile_BEm"/>
    <property type="match status" value="1"/>
</dbReference>
<dbReference type="CDD" id="cd00818">
    <property type="entry name" value="IleRS_core"/>
    <property type="match status" value="1"/>
</dbReference>
<dbReference type="FunFam" id="1.10.730.20:FF:000001">
    <property type="entry name" value="Isoleucine--tRNA ligase"/>
    <property type="match status" value="1"/>
</dbReference>
<dbReference type="FunFam" id="3.40.50.620:FF:000042">
    <property type="entry name" value="Isoleucine--tRNA ligase"/>
    <property type="match status" value="1"/>
</dbReference>
<dbReference type="FunFam" id="3.40.50.620:FF:000048">
    <property type="entry name" value="Isoleucine--tRNA ligase"/>
    <property type="match status" value="1"/>
</dbReference>
<dbReference type="FunFam" id="3.90.740.10:FF:000002">
    <property type="entry name" value="Isoleucine--tRNA ligase"/>
    <property type="match status" value="1"/>
</dbReference>
<dbReference type="Gene3D" id="1.10.730.20">
    <property type="match status" value="1"/>
</dbReference>
<dbReference type="Gene3D" id="3.40.50.620">
    <property type="entry name" value="HUPs"/>
    <property type="match status" value="2"/>
</dbReference>
<dbReference type="Gene3D" id="3.90.740.10">
    <property type="entry name" value="Valyl/Leucyl/Isoleucyl-tRNA synthetase, editing domain"/>
    <property type="match status" value="1"/>
</dbReference>
<dbReference type="HAMAP" id="MF_02002">
    <property type="entry name" value="Ile_tRNA_synth_type1"/>
    <property type="match status" value="1"/>
</dbReference>
<dbReference type="InterPro" id="IPR001412">
    <property type="entry name" value="aa-tRNA-synth_I_CS"/>
</dbReference>
<dbReference type="InterPro" id="IPR002300">
    <property type="entry name" value="aa-tRNA-synth_Ia"/>
</dbReference>
<dbReference type="InterPro" id="IPR033708">
    <property type="entry name" value="Anticodon_Ile_BEm"/>
</dbReference>
<dbReference type="InterPro" id="IPR002301">
    <property type="entry name" value="Ile-tRNA-ligase"/>
</dbReference>
<dbReference type="InterPro" id="IPR023585">
    <property type="entry name" value="Ile-tRNA-ligase_type1"/>
</dbReference>
<dbReference type="InterPro" id="IPR050081">
    <property type="entry name" value="Ile-tRNA_ligase"/>
</dbReference>
<dbReference type="InterPro" id="IPR013155">
    <property type="entry name" value="M/V/L/I-tRNA-synth_anticd-bd"/>
</dbReference>
<dbReference type="InterPro" id="IPR014729">
    <property type="entry name" value="Rossmann-like_a/b/a_fold"/>
</dbReference>
<dbReference type="InterPro" id="IPR009080">
    <property type="entry name" value="tRNAsynth_Ia_anticodon-bd"/>
</dbReference>
<dbReference type="InterPro" id="IPR009008">
    <property type="entry name" value="Val/Leu/Ile-tRNA-synth_edit"/>
</dbReference>
<dbReference type="InterPro" id="IPR010663">
    <property type="entry name" value="Znf_FPG/IleRS"/>
</dbReference>
<dbReference type="NCBIfam" id="TIGR00392">
    <property type="entry name" value="ileS"/>
    <property type="match status" value="1"/>
</dbReference>
<dbReference type="PANTHER" id="PTHR42765:SF1">
    <property type="entry name" value="ISOLEUCINE--TRNA LIGASE, MITOCHONDRIAL"/>
    <property type="match status" value="1"/>
</dbReference>
<dbReference type="PANTHER" id="PTHR42765">
    <property type="entry name" value="SOLEUCYL-TRNA SYNTHETASE"/>
    <property type="match status" value="1"/>
</dbReference>
<dbReference type="Pfam" id="PF08264">
    <property type="entry name" value="Anticodon_1"/>
    <property type="match status" value="1"/>
</dbReference>
<dbReference type="Pfam" id="PF00133">
    <property type="entry name" value="tRNA-synt_1"/>
    <property type="match status" value="1"/>
</dbReference>
<dbReference type="Pfam" id="PF06827">
    <property type="entry name" value="zf-FPG_IleRS"/>
    <property type="match status" value="1"/>
</dbReference>
<dbReference type="PRINTS" id="PR00984">
    <property type="entry name" value="TRNASYNTHILE"/>
</dbReference>
<dbReference type="SUPFAM" id="SSF47323">
    <property type="entry name" value="Anticodon-binding domain of a subclass of class I aminoacyl-tRNA synthetases"/>
    <property type="match status" value="1"/>
</dbReference>
<dbReference type="SUPFAM" id="SSF52374">
    <property type="entry name" value="Nucleotidylyl transferase"/>
    <property type="match status" value="1"/>
</dbReference>
<dbReference type="SUPFAM" id="SSF50677">
    <property type="entry name" value="ValRS/IleRS/LeuRS editing domain"/>
    <property type="match status" value="1"/>
</dbReference>
<dbReference type="PROSITE" id="PS00178">
    <property type="entry name" value="AA_TRNA_LIGASE_I"/>
    <property type="match status" value="1"/>
</dbReference>
<gene>
    <name evidence="1" type="primary">ileS</name>
    <name type="ordered locus">CGSHiEE_07150</name>
</gene>
<reference key="1">
    <citation type="journal article" date="2007" name="Genome Biol.">
        <title>Characterization and modeling of the Haemophilus influenzae core and supragenomes based on the complete genomic sequences of Rd and 12 clinical nontypeable strains.</title>
        <authorList>
            <person name="Hogg J.S."/>
            <person name="Hu F.Z."/>
            <person name="Janto B."/>
            <person name="Boissy R."/>
            <person name="Hayes J."/>
            <person name="Keefe R."/>
            <person name="Post J.C."/>
            <person name="Ehrlich G.D."/>
        </authorList>
    </citation>
    <scope>NUCLEOTIDE SEQUENCE [LARGE SCALE GENOMIC DNA]</scope>
    <source>
        <strain>PittEE</strain>
    </source>
</reference>
<comment type="function">
    <text evidence="1">Catalyzes the attachment of isoleucine to tRNA(Ile). As IleRS can inadvertently accommodate and process structurally similar amino acids such as valine, to avoid such errors it has two additional distinct tRNA(Ile)-dependent editing activities. One activity is designated as 'pretransfer' editing and involves the hydrolysis of activated Val-AMP. The other activity is designated 'posttransfer' editing and involves deacylation of mischarged Val-tRNA(Ile).</text>
</comment>
<comment type="catalytic activity">
    <reaction evidence="1">
        <text>tRNA(Ile) + L-isoleucine + ATP = L-isoleucyl-tRNA(Ile) + AMP + diphosphate</text>
        <dbReference type="Rhea" id="RHEA:11060"/>
        <dbReference type="Rhea" id="RHEA-COMP:9666"/>
        <dbReference type="Rhea" id="RHEA-COMP:9695"/>
        <dbReference type="ChEBI" id="CHEBI:30616"/>
        <dbReference type="ChEBI" id="CHEBI:33019"/>
        <dbReference type="ChEBI" id="CHEBI:58045"/>
        <dbReference type="ChEBI" id="CHEBI:78442"/>
        <dbReference type="ChEBI" id="CHEBI:78528"/>
        <dbReference type="ChEBI" id="CHEBI:456215"/>
        <dbReference type="EC" id="6.1.1.5"/>
    </reaction>
</comment>
<comment type="cofactor">
    <cofactor evidence="1">
        <name>Zn(2+)</name>
        <dbReference type="ChEBI" id="CHEBI:29105"/>
    </cofactor>
    <text evidence="1">Binds 1 zinc ion per subunit.</text>
</comment>
<comment type="subunit">
    <text evidence="1">Monomer.</text>
</comment>
<comment type="subcellular location">
    <subcellularLocation>
        <location evidence="1">Cytoplasm</location>
    </subcellularLocation>
</comment>
<comment type="domain">
    <text evidence="1">IleRS has two distinct active sites: one for aminoacylation and one for editing. The misactivated valine is translocated from the active site to the editing site, which sterically excludes the correctly activated isoleucine. The single editing site contains two valyl binding pockets, one specific for each substrate (Val-AMP or Val-tRNA(Ile)).</text>
</comment>
<comment type="similarity">
    <text evidence="1">Belongs to the class-I aminoacyl-tRNA synthetase family. IleS type 1 subfamily.</text>
</comment>
<accession>A5UDA6</accession>